<protein>
    <recommendedName>
        <fullName>Putative homeobox protein NANOG2</fullName>
    </recommendedName>
</protein>
<organism>
    <name type="scientific">Pan paniscus</name>
    <name type="common">Pygmy chimpanzee</name>
    <name type="synonym">Bonobo</name>
    <dbReference type="NCBI Taxonomy" id="9597"/>
    <lineage>
        <taxon>Eukaryota</taxon>
        <taxon>Metazoa</taxon>
        <taxon>Chordata</taxon>
        <taxon>Craniata</taxon>
        <taxon>Vertebrata</taxon>
        <taxon>Euteleostomi</taxon>
        <taxon>Mammalia</taxon>
        <taxon>Eutheria</taxon>
        <taxon>Euarchontoglires</taxon>
        <taxon>Primates</taxon>
        <taxon>Haplorrhini</taxon>
        <taxon>Catarrhini</taxon>
        <taxon>Hominidae</taxon>
        <taxon>Pan</taxon>
    </lineage>
</organism>
<comment type="function">
    <text evidence="1">Probable transcriptional regulator.</text>
</comment>
<comment type="subcellular location">
    <subcellularLocation>
        <location evidence="2">Nucleus</location>
    </subcellularLocation>
</comment>
<comment type="similarity">
    <text evidence="4">Belongs to the Nanog homeobox family.</text>
</comment>
<comment type="caution">
    <text evidence="4">Could be the product of a pseudogene.</text>
</comment>
<reference key="1">
    <citation type="submission" date="2006-08" db="EMBL/GenBank/DDBJ databases">
        <title>Positive selection in transcription factor genes on the human lineage.</title>
        <authorList>
            <person name="Nickel G.C."/>
            <person name="Tefft D.L."/>
            <person name="Trevarthen K."/>
            <person name="Funt J."/>
            <person name="Adams M.D."/>
        </authorList>
    </citation>
    <scope>NUCLEOTIDE SEQUENCE [GENOMIC DNA]</scope>
</reference>
<sequence>MDLPIQDSHDSSTSPKGKQPTTAEKSATKKEDKVPVKKQKTRTVFSSTQLCVLNDRFQRQKYLSLQQMQELSNILNLSYKQVKTWFQNQRMKSKRWQKNNWLKNSNGVTQGCLVNPTGNLPMWSNQTWNNSTWSNQTQNIQSWSNHSWNTQTWCTQSWNNQAWNSPFYNCGEESLQSCMQFQPNSPASDLEAALEAAGEGLNVIQQTARYFSTPQTMDLFLNYSTNMXXEDV</sequence>
<feature type="chain" id="PRO_0000285526" description="Putative homeobox protein NANOG2">
    <location>
        <begin position="1"/>
        <end position="232"/>
    </location>
</feature>
<feature type="repeat" description="1">
    <location>
        <begin position="123"/>
        <end position="127"/>
    </location>
</feature>
<feature type="repeat" description="2">
    <location>
        <begin position="128"/>
        <end position="132"/>
    </location>
</feature>
<feature type="repeat" description="3">
    <location>
        <begin position="133"/>
        <end position="137"/>
    </location>
</feature>
<feature type="repeat" description="4">
    <location>
        <begin position="143"/>
        <end position="147"/>
    </location>
</feature>
<feature type="repeat" description="5">
    <location>
        <begin position="148"/>
        <end position="152"/>
    </location>
</feature>
<feature type="repeat" description="6">
    <location>
        <begin position="153"/>
        <end position="157"/>
    </location>
</feature>
<feature type="repeat" description="7">
    <location>
        <begin position="158"/>
        <end position="162"/>
    </location>
</feature>
<feature type="repeat" description="8">
    <location>
        <begin position="163"/>
        <end position="167"/>
    </location>
</feature>
<feature type="region of interest" description="Disordered" evidence="3">
    <location>
        <begin position="1"/>
        <end position="39"/>
    </location>
</feature>
<feature type="region of interest" description="8 X repeats starting with a Trp in each unit">
    <location>
        <begin position="123"/>
        <end position="167"/>
    </location>
</feature>
<feature type="region of interest" description="Sufficient for transactivation activity" evidence="1">
    <location>
        <begin position="123"/>
        <end position="167"/>
    </location>
</feature>
<feature type="region of interest" description="Sufficient for strong transactivation activity" evidence="1">
    <location>
        <begin position="168"/>
        <end position="232"/>
    </location>
</feature>
<feature type="compositionally biased region" description="Polar residues" evidence="3">
    <location>
        <begin position="11"/>
        <end position="25"/>
    </location>
</feature>
<feature type="compositionally biased region" description="Basic and acidic residues" evidence="3">
    <location>
        <begin position="26"/>
        <end position="35"/>
    </location>
</feature>
<accession>A1YG92</accession>
<keyword id="KW-0238">DNA-binding</keyword>
<keyword id="KW-0371">Homeobox</keyword>
<keyword id="KW-0539">Nucleus</keyword>
<keyword id="KW-1185">Reference proteome</keyword>
<keyword id="KW-0677">Repeat</keyword>
<keyword id="KW-0804">Transcription</keyword>
<keyword id="KW-0805">Transcription regulation</keyword>
<name>NANG2_PANPA</name>
<evidence type="ECO:0000250" key="1"/>
<evidence type="ECO:0000255" key="2">
    <source>
        <dbReference type="PROSITE-ProRule" id="PRU00108"/>
    </source>
</evidence>
<evidence type="ECO:0000256" key="3">
    <source>
        <dbReference type="SAM" id="MobiDB-lite"/>
    </source>
</evidence>
<evidence type="ECO:0000305" key="4"/>
<proteinExistence type="uncertain"/>
<dbReference type="EMBL" id="DQ977239">
    <property type="protein sequence ID" value="ABM54317.1"/>
    <property type="molecule type" value="Genomic_DNA"/>
</dbReference>
<dbReference type="STRING" id="9597.ENSPPAP00000000916"/>
<dbReference type="eggNOG" id="KOG0491">
    <property type="taxonomic scope" value="Eukaryota"/>
</dbReference>
<dbReference type="Proteomes" id="UP000240080">
    <property type="component" value="Unplaced"/>
</dbReference>
<dbReference type="GO" id="GO:0005634">
    <property type="term" value="C:nucleus"/>
    <property type="evidence" value="ECO:0007669"/>
    <property type="project" value="UniProtKB-SubCell"/>
</dbReference>
<dbReference type="GO" id="GO:0000981">
    <property type="term" value="F:DNA-binding transcription factor activity, RNA polymerase II-specific"/>
    <property type="evidence" value="ECO:0007669"/>
    <property type="project" value="InterPro"/>
</dbReference>
<dbReference type="GO" id="GO:0000978">
    <property type="term" value="F:RNA polymerase II cis-regulatory region sequence-specific DNA binding"/>
    <property type="evidence" value="ECO:0007669"/>
    <property type="project" value="TreeGrafter"/>
</dbReference>
<dbReference type="CDD" id="cd00086">
    <property type="entry name" value="homeodomain"/>
    <property type="match status" value="1"/>
</dbReference>
<dbReference type="FunFam" id="1.10.10.60:FF:000203">
    <property type="entry name" value="Nanog homeobox transcription factor"/>
    <property type="match status" value="1"/>
</dbReference>
<dbReference type="Gene3D" id="1.10.10.60">
    <property type="entry name" value="Homeodomain-like"/>
    <property type="match status" value="1"/>
</dbReference>
<dbReference type="InterPro" id="IPR050460">
    <property type="entry name" value="Distal-less_Homeobox_TF"/>
</dbReference>
<dbReference type="InterPro" id="IPR001356">
    <property type="entry name" value="HD"/>
</dbReference>
<dbReference type="InterPro" id="IPR017970">
    <property type="entry name" value="Homeobox_CS"/>
</dbReference>
<dbReference type="InterPro" id="IPR009057">
    <property type="entry name" value="Homeodomain-like_sf"/>
</dbReference>
<dbReference type="PANTHER" id="PTHR24327">
    <property type="entry name" value="HOMEOBOX PROTEIN"/>
    <property type="match status" value="1"/>
</dbReference>
<dbReference type="PANTHER" id="PTHR24327:SF79">
    <property type="entry name" value="HOMEOBOX PROTEIN NANOG-RELATED"/>
    <property type="match status" value="1"/>
</dbReference>
<dbReference type="Pfam" id="PF00046">
    <property type="entry name" value="Homeodomain"/>
    <property type="match status" value="1"/>
</dbReference>
<dbReference type="SMART" id="SM00389">
    <property type="entry name" value="HOX"/>
    <property type="match status" value="1"/>
</dbReference>
<dbReference type="SUPFAM" id="SSF46689">
    <property type="entry name" value="Homeodomain-like"/>
    <property type="match status" value="1"/>
</dbReference>
<dbReference type="PROSITE" id="PS00027">
    <property type="entry name" value="HOMEOBOX_1"/>
    <property type="match status" value="1"/>
</dbReference>
<dbReference type="PROSITE" id="PS50071">
    <property type="entry name" value="HOMEOBOX_2"/>
    <property type="match status" value="1"/>
</dbReference>
<gene>
    <name type="primary">NANOGP1</name>
    <name type="synonym">NANOG2</name>
</gene>